<dbReference type="EMBL" id="CP000095">
    <property type="protein sequence ID" value="AAZ58595.1"/>
    <property type="molecule type" value="Genomic_DNA"/>
</dbReference>
<dbReference type="RefSeq" id="WP_011295449.1">
    <property type="nucleotide sequence ID" value="NC_007335.2"/>
</dbReference>
<dbReference type="SMR" id="Q46IT3"/>
<dbReference type="STRING" id="59920.PMN2A_1105"/>
<dbReference type="KEGG" id="pmn:PMN2A_1105"/>
<dbReference type="HOGENOM" id="CLU_074407_2_2_3"/>
<dbReference type="OrthoDB" id="9809073at2"/>
<dbReference type="PhylomeDB" id="Q46IT3"/>
<dbReference type="Proteomes" id="UP000002535">
    <property type="component" value="Chromosome"/>
</dbReference>
<dbReference type="GO" id="GO:0022625">
    <property type="term" value="C:cytosolic large ribosomal subunit"/>
    <property type="evidence" value="ECO:0007669"/>
    <property type="project" value="TreeGrafter"/>
</dbReference>
<dbReference type="GO" id="GO:0003735">
    <property type="term" value="F:structural constituent of ribosome"/>
    <property type="evidence" value="ECO:0007669"/>
    <property type="project" value="InterPro"/>
</dbReference>
<dbReference type="GO" id="GO:0006412">
    <property type="term" value="P:translation"/>
    <property type="evidence" value="ECO:0007669"/>
    <property type="project" value="UniProtKB-UniRule"/>
</dbReference>
<dbReference type="FunFam" id="3.90.1030.10:FF:000001">
    <property type="entry name" value="50S ribosomal protein L17"/>
    <property type="match status" value="1"/>
</dbReference>
<dbReference type="Gene3D" id="3.90.1030.10">
    <property type="entry name" value="Ribosomal protein L17"/>
    <property type="match status" value="1"/>
</dbReference>
<dbReference type="HAMAP" id="MF_01368">
    <property type="entry name" value="Ribosomal_bL17"/>
    <property type="match status" value="1"/>
</dbReference>
<dbReference type="InterPro" id="IPR000456">
    <property type="entry name" value="Ribosomal_bL17"/>
</dbReference>
<dbReference type="InterPro" id="IPR036373">
    <property type="entry name" value="Ribosomal_bL17_sf"/>
</dbReference>
<dbReference type="NCBIfam" id="TIGR00059">
    <property type="entry name" value="L17"/>
    <property type="match status" value="1"/>
</dbReference>
<dbReference type="PANTHER" id="PTHR14413:SF16">
    <property type="entry name" value="LARGE RIBOSOMAL SUBUNIT PROTEIN BL17M"/>
    <property type="match status" value="1"/>
</dbReference>
<dbReference type="PANTHER" id="PTHR14413">
    <property type="entry name" value="RIBOSOMAL PROTEIN L17"/>
    <property type="match status" value="1"/>
</dbReference>
<dbReference type="Pfam" id="PF01196">
    <property type="entry name" value="Ribosomal_L17"/>
    <property type="match status" value="1"/>
</dbReference>
<dbReference type="SUPFAM" id="SSF64263">
    <property type="entry name" value="Prokaryotic ribosomal protein L17"/>
    <property type="match status" value="1"/>
</dbReference>
<protein>
    <recommendedName>
        <fullName evidence="1">Large ribosomal subunit protein bL17</fullName>
    </recommendedName>
    <alternativeName>
        <fullName evidence="2">50S ribosomal protein L17</fullName>
    </alternativeName>
</protein>
<proteinExistence type="inferred from homology"/>
<evidence type="ECO:0000255" key="1">
    <source>
        <dbReference type="HAMAP-Rule" id="MF_01368"/>
    </source>
</evidence>
<evidence type="ECO:0000305" key="2"/>
<gene>
    <name evidence="1" type="primary">rplQ</name>
    <name evidence="1" type="synonym">rpl17</name>
    <name type="ordered locus">PMN2A_1105</name>
</gene>
<sequence length="116" mass="13348">MRHQRRIPQLSLPADQRKALLRGLTTQLIREGRVTTTKARAKALRNETERMITLAKDGSLASRRRAIGYVYDKQLVHALFEKAQERYGDREGGYTRIVRTTPRRGDNSEMAIVELV</sequence>
<comment type="subunit">
    <text evidence="1">Part of the 50S ribosomal subunit. Contacts protein L32.</text>
</comment>
<comment type="similarity">
    <text evidence="1">Belongs to the bacterial ribosomal protein bL17 family.</text>
</comment>
<accession>Q46IT3</accession>
<feature type="chain" id="PRO_1000055914" description="Large ribosomal subunit protein bL17">
    <location>
        <begin position="1"/>
        <end position="116"/>
    </location>
</feature>
<reference key="1">
    <citation type="journal article" date="2007" name="PLoS Genet.">
        <title>Patterns and implications of gene gain and loss in the evolution of Prochlorococcus.</title>
        <authorList>
            <person name="Kettler G.C."/>
            <person name="Martiny A.C."/>
            <person name="Huang K."/>
            <person name="Zucker J."/>
            <person name="Coleman M.L."/>
            <person name="Rodrigue S."/>
            <person name="Chen F."/>
            <person name="Lapidus A."/>
            <person name="Ferriera S."/>
            <person name="Johnson J."/>
            <person name="Steglich C."/>
            <person name="Church G.M."/>
            <person name="Richardson P."/>
            <person name="Chisholm S.W."/>
        </authorList>
    </citation>
    <scope>NUCLEOTIDE SEQUENCE [LARGE SCALE GENOMIC DNA]</scope>
    <source>
        <strain>NATL2A</strain>
    </source>
</reference>
<name>RL17_PROMT</name>
<organism>
    <name type="scientific">Prochlorococcus marinus (strain NATL2A)</name>
    <dbReference type="NCBI Taxonomy" id="59920"/>
    <lineage>
        <taxon>Bacteria</taxon>
        <taxon>Bacillati</taxon>
        <taxon>Cyanobacteriota</taxon>
        <taxon>Cyanophyceae</taxon>
        <taxon>Synechococcales</taxon>
        <taxon>Prochlorococcaceae</taxon>
        <taxon>Prochlorococcus</taxon>
    </lineage>
</organism>
<keyword id="KW-1185">Reference proteome</keyword>
<keyword id="KW-0687">Ribonucleoprotein</keyword>
<keyword id="KW-0689">Ribosomal protein</keyword>